<comment type="function">
    <text evidence="1">Functions as a component of both the DNA-binding general transcription initiation factor complex TFIID and the transcription coactivator SAGA complex. Binding of TFIID to a promoter (with or without TATA element) is the initial step in pre-initiation complex (PIC) formation. TFIID plays a key role in the regulation of gene expression by RNA polymerase II through different activities such as transcription activator interaction, core promoter recognition and selectivity, TFIIA and TFIIB interaction, chromatin modification (histone acetylation by TAF1), facilitation of DNA opening and initiation of transcription. SAGA acts as a general cofactor required for essentially all RNA polymerase II transcription. At the promoters, SAGA is required for transcription pre-initiation complex (PIC) recruitment. It influences RNA polymerase II transcriptional activity through different activities such as TBP interaction (via core/TAF module) and promoter selectivity, interaction with transcription activators (via Tra1/SPT module), and chromatin modification through histone acetylation (via HAT module) and deubiquitination (via DUB module). SAGA preferentially acetylates histones H3 (to form H3K9ac, H3K14ac, H3K18ac and H3K23ac) and H2B and deubiquitinates histone H2B. SAGA interacts with DNA via upstream activating sequences (UASs).</text>
</comment>
<comment type="subunit">
    <text evidence="1 4 5">Component of the 1.8 MDa SAGA (Spt-Ada-Gcn5 acetyltransferase) complex, which is composed of 19 subunits tra1, spt7, taf5, ngg1/ada3, sgf73, spt20, spt8, taf12, taf6, hfi1/ada1, ubp8, gcn5, ada2, spt3, sgf29, taf10, taf9, sgf11 and sus1 (PubMed:19056896). The SAGA complex is composed of 4 modules, namely the HAT (histone acetyltransferase) module (gcn5, ada2, ngg1/ada3 and sgf29), the DUB (deubiquitinating) module (ubp8, sgf11, sgf73 and sus1), the core or TAF (TBP-associated factor) module (taf5, taf6, taf9, taf10 and taf12), and the Tra1 or SPT (Suppressor of Ty) module (tra1, hfi1/ada1, spt3, spt7, spt8 and spt20). The Tra1/SPT module binds activators, the core module recruits TBP (TATA-binding protein), the HAT module contains the histone H3 acetyltransferase gcn5, and the DUB module comprises the histone H2B deubiquitinase ubp8 (By similarity). Component of the 1.2 MDa TFIID complex, which is composed of TATA-binding protein (TBP) and the 14 TBP-associated factors (TAFs) (PubMed:19913479). It comprises 1 copy of each taf1, taf2, taf3, taf7, taf8, taf11, taf13, 2 copies of each taf4, taf5, taf6, taf9, taf10, taf12, and 3 copies of taf14. In TFIID, taf9 heterodimerizes with taf6, forming ultimately an octamer consisting of a taf6-taf9 heterotetramer core flanked by taf4-taf12 dimers on either side, similar to the histone H2A-H2B-H3-H4 octamer (By similarity).</text>
</comment>
<comment type="subcellular location">
    <subcellularLocation>
        <location evidence="1">Nucleus</location>
    </subcellularLocation>
</comment>
<comment type="similarity">
    <text evidence="6">Belongs to the TAF9 family.</text>
</comment>
<gene>
    <name type="primary">taf9</name>
    <name type="ORF">SPAC12G12.05c</name>
</gene>
<protein>
    <recommendedName>
        <fullName>SAGA complex/transcription factor TFIID complex subunit Taf9</fullName>
    </recommendedName>
    <alternativeName>
        <fullName>TBP-associated factor 9</fullName>
    </alternativeName>
    <alternativeName>
        <fullName>Transcription initiation factor TFIID subunit 9</fullName>
    </alternativeName>
</protein>
<proteinExistence type="evidence at protein level"/>
<name>TAF9_SCHPO</name>
<sequence length="163" mass="18448">MSSPGISDESIKGPKDVRLIHLILSSLGVPSYSQTVPLQLLTFAHRYTQQLIQDSQVYAEHSRGQNAPISVEDVRLAVASQINHSFTGPPPKEFLLELAMERNRKPLPQIQPSYGFRLPPEKYCLTQPNWIVSNETQQNQPKEENSSDSRMEEDKLDFSVKSE</sequence>
<evidence type="ECO:0000250" key="1">
    <source>
        <dbReference type="UniProtKB" id="Q05027"/>
    </source>
</evidence>
<evidence type="ECO:0000256" key="2">
    <source>
        <dbReference type="SAM" id="MobiDB-lite"/>
    </source>
</evidence>
<evidence type="ECO:0000269" key="3">
    <source>
    </source>
</evidence>
<evidence type="ECO:0000269" key="4">
    <source>
    </source>
</evidence>
<evidence type="ECO:0000269" key="5">
    <source>
    </source>
</evidence>
<evidence type="ECO:0000305" key="6"/>
<dbReference type="EMBL" id="CU329670">
    <property type="protein sequence ID" value="CAA91500.1"/>
    <property type="molecule type" value="Genomic_DNA"/>
</dbReference>
<dbReference type="PIR" id="S62536">
    <property type="entry name" value="S62536"/>
</dbReference>
<dbReference type="RefSeq" id="NP_592893.1">
    <property type="nucleotide sequence ID" value="NM_001018293.2"/>
</dbReference>
<dbReference type="SMR" id="Q09869"/>
<dbReference type="BioGRID" id="279565">
    <property type="interactions" value="8"/>
</dbReference>
<dbReference type="FunCoup" id="Q09869">
    <property type="interactions" value="74"/>
</dbReference>
<dbReference type="IntAct" id="Q09869">
    <property type="interactions" value="2"/>
</dbReference>
<dbReference type="MINT" id="Q09869"/>
<dbReference type="STRING" id="284812.Q09869"/>
<dbReference type="iPTMnet" id="Q09869"/>
<dbReference type="PaxDb" id="4896-SPAC12G12.05c.1"/>
<dbReference type="EnsemblFungi" id="SPAC12G12.05c.1">
    <property type="protein sequence ID" value="SPAC12G12.05c.1:pep"/>
    <property type="gene ID" value="SPAC12G12.05c"/>
</dbReference>
<dbReference type="GeneID" id="2543133"/>
<dbReference type="KEGG" id="spo:2543133"/>
<dbReference type="PomBase" id="SPAC12G12.05c">
    <property type="gene designation" value="taf9"/>
</dbReference>
<dbReference type="VEuPathDB" id="FungiDB:SPAC12G12.05c"/>
<dbReference type="eggNOG" id="KOG3334">
    <property type="taxonomic scope" value="Eukaryota"/>
</dbReference>
<dbReference type="HOGENOM" id="CLU_068315_3_1_1"/>
<dbReference type="InParanoid" id="Q09869"/>
<dbReference type="OMA" id="PHDAQVM"/>
<dbReference type="PhylomeDB" id="Q09869"/>
<dbReference type="Reactome" id="R-SPO-5689880">
    <property type="pathway name" value="Ub-specific processing proteases"/>
</dbReference>
<dbReference type="Reactome" id="R-SPO-674695">
    <property type="pathway name" value="RNA Polymerase II Pre-transcription Events"/>
</dbReference>
<dbReference type="Reactome" id="R-SPO-6807505">
    <property type="pathway name" value="RNA polymerase II transcribes snRNA genes"/>
</dbReference>
<dbReference type="Reactome" id="R-SPO-73776">
    <property type="pathway name" value="RNA Polymerase II Promoter Escape"/>
</dbReference>
<dbReference type="Reactome" id="R-SPO-73779">
    <property type="pathway name" value="RNA Polymerase II Transcription Pre-Initiation And Promoter Opening"/>
</dbReference>
<dbReference type="Reactome" id="R-SPO-75953">
    <property type="pathway name" value="RNA Polymerase II Transcription Initiation"/>
</dbReference>
<dbReference type="Reactome" id="R-SPO-76042">
    <property type="pathway name" value="RNA Polymerase II Transcription Initiation And Promoter Clearance"/>
</dbReference>
<dbReference type="PRO" id="PR:Q09869"/>
<dbReference type="Proteomes" id="UP000002485">
    <property type="component" value="Chromosome I"/>
</dbReference>
<dbReference type="GO" id="GO:0005829">
    <property type="term" value="C:cytosol"/>
    <property type="evidence" value="ECO:0007005"/>
    <property type="project" value="PomBase"/>
</dbReference>
<dbReference type="GO" id="GO:0005634">
    <property type="term" value="C:nucleus"/>
    <property type="evidence" value="ECO:0007005"/>
    <property type="project" value="PomBase"/>
</dbReference>
<dbReference type="GO" id="GO:0000124">
    <property type="term" value="C:SAGA complex"/>
    <property type="evidence" value="ECO:0000314"/>
    <property type="project" value="PomBase"/>
</dbReference>
<dbReference type="GO" id="GO:0005669">
    <property type="term" value="C:transcription factor TFIID complex"/>
    <property type="evidence" value="ECO:0000314"/>
    <property type="project" value="PomBase"/>
</dbReference>
<dbReference type="GO" id="GO:0046982">
    <property type="term" value="F:protein heterodimerization activity"/>
    <property type="evidence" value="ECO:0007669"/>
    <property type="project" value="InterPro"/>
</dbReference>
<dbReference type="GO" id="GO:0016251">
    <property type="term" value="F:RNA polymerase II general transcription initiation factor activity"/>
    <property type="evidence" value="ECO:0000269"/>
    <property type="project" value="PomBase"/>
</dbReference>
<dbReference type="GO" id="GO:0003713">
    <property type="term" value="F:transcription coactivator activity"/>
    <property type="evidence" value="ECO:0000318"/>
    <property type="project" value="GO_Central"/>
</dbReference>
<dbReference type="GO" id="GO:0051123">
    <property type="term" value="P:RNA polymerase II preinitiation complex assembly"/>
    <property type="evidence" value="ECO:0000318"/>
    <property type="project" value="GO_Central"/>
</dbReference>
<dbReference type="GO" id="GO:0006367">
    <property type="term" value="P:transcription initiation at RNA polymerase II promoter"/>
    <property type="evidence" value="ECO:0000269"/>
    <property type="project" value="PomBase"/>
</dbReference>
<dbReference type="GO" id="GO:0045815">
    <property type="term" value="P:transcription initiation-coupled chromatin remodeling"/>
    <property type="evidence" value="ECO:0000305"/>
    <property type="project" value="PomBase"/>
</dbReference>
<dbReference type="CDD" id="cd07979">
    <property type="entry name" value="HFD_TAF9"/>
    <property type="match status" value="1"/>
</dbReference>
<dbReference type="Gene3D" id="1.10.20.10">
    <property type="entry name" value="Histone, subunit A"/>
    <property type="match status" value="1"/>
</dbReference>
<dbReference type="InterPro" id="IPR009072">
    <property type="entry name" value="Histone-fold"/>
</dbReference>
<dbReference type="InterPro" id="IPR003162">
    <property type="entry name" value="TFIID-31"/>
</dbReference>
<dbReference type="InterPro" id="IPR051431">
    <property type="entry name" value="TFIID_subunit_9"/>
</dbReference>
<dbReference type="PANTHER" id="PTHR48068">
    <property type="entry name" value="TAF9 RNA POLYMERASE II, TATA BOX-BINDING PROTEIN (TBP)-ASSOCIATED FACTOR"/>
    <property type="match status" value="1"/>
</dbReference>
<dbReference type="PANTHER" id="PTHR48068:SF4">
    <property type="entry name" value="TATA-BOX BINDING PROTEIN ASSOCIATED FACTOR 9"/>
    <property type="match status" value="1"/>
</dbReference>
<dbReference type="Pfam" id="PF02291">
    <property type="entry name" value="TFIID-31kDa"/>
    <property type="match status" value="1"/>
</dbReference>
<dbReference type="SUPFAM" id="SSF47113">
    <property type="entry name" value="Histone-fold"/>
    <property type="match status" value="1"/>
</dbReference>
<keyword id="KW-0539">Nucleus</keyword>
<keyword id="KW-0597">Phosphoprotein</keyword>
<keyword id="KW-1185">Reference proteome</keyword>
<keyword id="KW-0804">Transcription</keyword>
<keyword id="KW-0805">Transcription regulation</keyword>
<organism>
    <name type="scientific">Schizosaccharomyces pombe (strain 972 / ATCC 24843)</name>
    <name type="common">Fission yeast</name>
    <dbReference type="NCBI Taxonomy" id="284812"/>
    <lineage>
        <taxon>Eukaryota</taxon>
        <taxon>Fungi</taxon>
        <taxon>Dikarya</taxon>
        <taxon>Ascomycota</taxon>
        <taxon>Taphrinomycotina</taxon>
        <taxon>Schizosaccharomycetes</taxon>
        <taxon>Schizosaccharomycetales</taxon>
        <taxon>Schizosaccharomycetaceae</taxon>
        <taxon>Schizosaccharomyces</taxon>
    </lineage>
</organism>
<feature type="chain" id="PRO_0000118895" description="SAGA complex/transcription factor TFIID complex subunit Taf9">
    <location>
        <begin position="1"/>
        <end position="163"/>
    </location>
</feature>
<feature type="region of interest" description="Disordered" evidence="2">
    <location>
        <begin position="131"/>
        <end position="163"/>
    </location>
</feature>
<feature type="compositionally biased region" description="Polar residues" evidence="2">
    <location>
        <begin position="131"/>
        <end position="140"/>
    </location>
</feature>
<feature type="compositionally biased region" description="Basic and acidic residues" evidence="2">
    <location>
        <begin position="141"/>
        <end position="163"/>
    </location>
</feature>
<feature type="modified residue" description="Phosphoserine" evidence="3">
    <location>
        <position position="159"/>
    </location>
</feature>
<accession>Q09869</accession>
<reference key="1">
    <citation type="journal article" date="2002" name="Nature">
        <title>The genome sequence of Schizosaccharomyces pombe.</title>
        <authorList>
            <person name="Wood V."/>
            <person name="Gwilliam R."/>
            <person name="Rajandream M.A."/>
            <person name="Lyne M.H."/>
            <person name="Lyne R."/>
            <person name="Stewart A."/>
            <person name="Sgouros J.G."/>
            <person name="Peat N."/>
            <person name="Hayles J."/>
            <person name="Baker S.G."/>
            <person name="Basham D."/>
            <person name="Bowman S."/>
            <person name="Brooks K."/>
            <person name="Brown D."/>
            <person name="Brown S."/>
            <person name="Chillingworth T."/>
            <person name="Churcher C.M."/>
            <person name="Collins M."/>
            <person name="Connor R."/>
            <person name="Cronin A."/>
            <person name="Davis P."/>
            <person name="Feltwell T."/>
            <person name="Fraser A."/>
            <person name="Gentles S."/>
            <person name="Goble A."/>
            <person name="Hamlin N."/>
            <person name="Harris D.E."/>
            <person name="Hidalgo J."/>
            <person name="Hodgson G."/>
            <person name="Holroyd S."/>
            <person name="Hornsby T."/>
            <person name="Howarth S."/>
            <person name="Huckle E.J."/>
            <person name="Hunt S."/>
            <person name="Jagels K."/>
            <person name="James K.D."/>
            <person name="Jones L."/>
            <person name="Jones M."/>
            <person name="Leather S."/>
            <person name="McDonald S."/>
            <person name="McLean J."/>
            <person name="Mooney P."/>
            <person name="Moule S."/>
            <person name="Mungall K.L."/>
            <person name="Murphy L.D."/>
            <person name="Niblett D."/>
            <person name="Odell C."/>
            <person name="Oliver K."/>
            <person name="O'Neil S."/>
            <person name="Pearson D."/>
            <person name="Quail M.A."/>
            <person name="Rabbinowitsch E."/>
            <person name="Rutherford K.M."/>
            <person name="Rutter S."/>
            <person name="Saunders D."/>
            <person name="Seeger K."/>
            <person name="Sharp S."/>
            <person name="Skelton J."/>
            <person name="Simmonds M.N."/>
            <person name="Squares R."/>
            <person name="Squares S."/>
            <person name="Stevens K."/>
            <person name="Taylor K."/>
            <person name="Taylor R.G."/>
            <person name="Tivey A."/>
            <person name="Walsh S.V."/>
            <person name="Warren T."/>
            <person name="Whitehead S."/>
            <person name="Woodward J.R."/>
            <person name="Volckaert G."/>
            <person name="Aert R."/>
            <person name="Robben J."/>
            <person name="Grymonprez B."/>
            <person name="Weltjens I."/>
            <person name="Vanstreels E."/>
            <person name="Rieger M."/>
            <person name="Schaefer M."/>
            <person name="Mueller-Auer S."/>
            <person name="Gabel C."/>
            <person name="Fuchs M."/>
            <person name="Duesterhoeft A."/>
            <person name="Fritzc C."/>
            <person name="Holzer E."/>
            <person name="Moestl D."/>
            <person name="Hilbert H."/>
            <person name="Borzym K."/>
            <person name="Langer I."/>
            <person name="Beck A."/>
            <person name="Lehrach H."/>
            <person name="Reinhardt R."/>
            <person name="Pohl T.M."/>
            <person name="Eger P."/>
            <person name="Zimmermann W."/>
            <person name="Wedler H."/>
            <person name="Wambutt R."/>
            <person name="Purnelle B."/>
            <person name="Goffeau A."/>
            <person name="Cadieu E."/>
            <person name="Dreano S."/>
            <person name="Gloux S."/>
            <person name="Lelaure V."/>
            <person name="Mottier S."/>
            <person name="Galibert F."/>
            <person name="Aves S.J."/>
            <person name="Xiang Z."/>
            <person name="Hunt C."/>
            <person name="Moore K."/>
            <person name="Hurst S.M."/>
            <person name="Lucas M."/>
            <person name="Rochet M."/>
            <person name="Gaillardin C."/>
            <person name="Tallada V.A."/>
            <person name="Garzon A."/>
            <person name="Thode G."/>
            <person name="Daga R.R."/>
            <person name="Cruzado L."/>
            <person name="Jimenez J."/>
            <person name="Sanchez M."/>
            <person name="del Rey F."/>
            <person name="Benito J."/>
            <person name="Dominguez A."/>
            <person name="Revuelta J.L."/>
            <person name="Moreno S."/>
            <person name="Armstrong J."/>
            <person name="Forsburg S.L."/>
            <person name="Cerutti L."/>
            <person name="Lowe T."/>
            <person name="McCombie W.R."/>
            <person name="Paulsen I."/>
            <person name="Potashkin J."/>
            <person name="Shpakovski G.V."/>
            <person name="Ussery D."/>
            <person name="Barrell B.G."/>
            <person name="Nurse P."/>
        </authorList>
    </citation>
    <scope>NUCLEOTIDE SEQUENCE [LARGE SCALE GENOMIC DNA]</scope>
    <source>
        <strain>972 / ATCC 24843</strain>
    </source>
</reference>
<reference key="2">
    <citation type="journal article" date="2008" name="Genes Dev.">
        <title>The S. pombe SAGA complex controls the switch from proliferation to sexual differentiation through the opposing roles of its subunits Gcn5 and Spt8.</title>
        <authorList>
            <person name="Helmlinger D."/>
            <person name="Marguerat S."/>
            <person name="Villen J."/>
            <person name="Gygi S.P."/>
            <person name="Bahler J."/>
            <person name="Winston F."/>
        </authorList>
    </citation>
    <scope>IDENTIFICATION IN THE SAGA COMPLEX</scope>
    <scope>IDENTIFICATION BY MASS SPECTROMETRY</scope>
</reference>
<reference key="3">
    <citation type="journal article" date="2008" name="J. Proteome Res.">
        <title>Phosphoproteome analysis of fission yeast.</title>
        <authorList>
            <person name="Wilson-Grady J.T."/>
            <person name="Villen J."/>
            <person name="Gygi S.P."/>
        </authorList>
    </citation>
    <scope>PHOSPHORYLATION [LARGE SCALE ANALYSIS] AT SER-159</scope>
    <scope>IDENTIFICATION BY MASS SPECTROMETRY</scope>
</reference>
<reference key="4">
    <citation type="journal article" date="2009" name="Structure">
        <title>Cryo-EM reveals promoter DNA binding and conformational flexibility of the general transcription factor TFIID.</title>
        <authorList>
            <person name="Elmlund H."/>
            <person name="Baraznenok V."/>
            <person name="Linder T."/>
            <person name="Szilagyi Z."/>
            <person name="Rofougaran R."/>
            <person name="Hofer A."/>
            <person name="Hebert H."/>
            <person name="Lindahl M."/>
            <person name="Gustafsson C.M."/>
        </authorList>
    </citation>
    <scope>STRUCTURE BY ELECTRON MICROSCOPY OF TFIID</scope>
</reference>